<gene>
    <name evidence="1" type="primary">purH</name>
    <name type="ordered locus">SEN3962</name>
</gene>
<dbReference type="EC" id="2.1.2.3" evidence="1"/>
<dbReference type="EC" id="3.5.4.10" evidence="1"/>
<dbReference type="EMBL" id="AM933172">
    <property type="protein sequence ID" value="CAR35531.1"/>
    <property type="molecule type" value="Genomic_DNA"/>
</dbReference>
<dbReference type="RefSeq" id="WP_001187494.1">
    <property type="nucleotide sequence ID" value="NC_011294.1"/>
</dbReference>
<dbReference type="SMR" id="B5QYG1"/>
<dbReference type="KEGG" id="set:SEN3962"/>
<dbReference type="HOGENOM" id="CLU_016316_5_2_6"/>
<dbReference type="UniPathway" id="UPA00074">
    <property type="reaction ID" value="UER00133"/>
</dbReference>
<dbReference type="UniPathway" id="UPA00074">
    <property type="reaction ID" value="UER00135"/>
</dbReference>
<dbReference type="Proteomes" id="UP000000613">
    <property type="component" value="Chromosome"/>
</dbReference>
<dbReference type="GO" id="GO:0005829">
    <property type="term" value="C:cytosol"/>
    <property type="evidence" value="ECO:0007669"/>
    <property type="project" value="TreeGrafter"/>
</dbReference>
<dbReference type="GO" id="GO:0003937">
    <property type="term" value="F:IMP cyclohydrolase activity"/>
    <property type="evidence" value="ECO:0007669"/>
    <property type="project" value="UniProtKB-UniRule"/>
</dbReference>
<dbReference type="GO" id="GO:0004643">
    <property type="term" value="F:phosphoribosylaminoimidazolecarboxamide formyltransferase activity"/>
    <property type="evidence" value="ECO:0007669"/>
    <property type="project" value="UniProtKB-UniRule"/>
</dbReference>
<dbReference type="GO" id="GO:0006189">
    <property type="term" value="P:'de novo' IMP biosynthetic process"/>
    <property type="evidence" value="ECO:0007669"/>
    <property type="project" value="UniProtKB-UniRule"/>
</dbReference>
<dbReference type="CDD" id="cd01421">
    <property type="entry name" value="IMPCH"/>
    <property type="match status" value="1"/>
</dbReference>
<dbReference type="FunFam" id="3.40.140.20:FF:000001">
    <property type="entry name" value="Bifunctional purine biosynthesis protein PurH"/>
    <property type="match status" value="1"/>
</dbReference>
<dbReference type="FunFam" id="3.40.140.20:FF:000002">
    <property type="entry name" value="Bifunctional purine biosynthesis protein PurH"/>
    <property type="match status" value="1"/>
</dbReference>
<dbReference type="FunFam" id="3.40.50.1380:FF:000001">
    <property type="entry name" value="Bifunctional purine biosynthesis protein PurH"/>
    <property type="match status" value="1"/>
</dbReference>
<dbReference type="Gene3D" id="3.40.140.20">
    <property type="match status" value="2"/>
</dbReference>
<dbReference type="Gene3D" id="3.40.50.1380">
    <property type="entry name" value="Methylglyoxal synthase-like domain"/>
    <property type="match status" value="1"/>
</dbReference>
<dbReference type="HAMAP" id="MF_00139">
    <property type="entry name" value="PurH"/>
    <property type="match status" value="1"/>
</dbReference>
<dbReference type="InterPro" id="IPR024051">
    <property type="entry name" value="AICAR_Tfase_dup_dom_sf"/>
</dbReference>
<dbReference type="InterPro" id="IPR016193">
    <property type="entry name" value="Cytidine_deaminase-like"/>
</dbReference>
<dbReference type="InterPro" id="IPR011607">
    <property type="entry name" value="MGS-like_dom"/>
</dbReference>
<dbReference type="InterPro" id="IPR036914">
    <property type="entry name" value="MGS-like_dom_sf"/>
</dbReference>
<dbReference type="InterPro" id="IPR002695">
    <property type="entry name" value="PurH-like"/>
</dbReference>
<dbReference type="NCBIfam" id="NF002049">
    <property type="entry name" value="PRK00881.1"/>
    <property type="match status" value="1"/>
</dbReference>
<dbReference type="NCBIfam" id="TIGR00355">
    <property type="entry name" value="purH"/>
    <property type="match status" value="1"/>
</dbReference>
<dbReference type="PANTHER" id="PTHR11692:SF0">
    <property type="entry name" value="BIFUNCTIONAL PURINE BIOSYNTHESIS PROTEIN ATIC"/>
    <property type="match status" value="1"/>
</dbReference>
<dbReference type="PANTHER" id="PTHR11692">
    <property type="entry name" value="BIFUNCTIONAL PURINE BIOSYNTHESIS PROTEIN PURH"/>
    <property type="match status" value="1"/>
</dbReference>
<dbReference type="Pfam" id="PF01808">
    <property type="entry name" value="AICARFT_IMPCHas"/>
    <property type="match status" value="1"/>
</dbReference>
<dbReference type="Pfam" id="PF02142">
    <property type="entry name" value="MGS"/>
    <property type="match status" value="1"/>
</dbReference>
<dbReference type="PIRSF" id="PIRSF000414">
    <property type="entry name" value="AICARFT_IMPCHas"/>
    <property type="match status" value="1"/>
</dbReference>
<dbReference type="SMART" id="SM00798">
    <property type="entry name" value="AICARFT_IMPCHas"/>
    <property type="match status" value="1"/>
</dbReference>
<dbReference type="SMART" id="SM00851">
    <property type="entry name" value="MGS"/>
    <property type="match status" value="1"/>
</dbReference>
<dbReference type="SUPFAM" id="SSF53927">
    <property type="entry name" value="Cytidine deaminase-like"/>
    <property type="match status" value="1"/>
</dbReference>
<dbReference type="SUPFAM" id="SSF52335">
    <property type="entry name" value="Methylglyoxal synthase-like"/>
    <property type="match status" value="1"/>
</dbReference>
<dbReference type="PROSITE" id="PS51855">
    <property type="entry name" value="MGS"/>
    <property type="match status" value="1"/>
</dbReference>
<feature type="chain" id="PRO_1000096090" description="Bifunctional purine biosynthesis protein PurH">
    <location>
        <begin position="1"/>
        <end position="529"/>
    </location>
</feature>
<feature type="domain" description="MGS-like" evidence="2">
    <location>
        <begin position="1"/>
        <end position="148"/>
    </location>
</feature>
<accession>B5QYG1</accession>
<comment type="catalytic activity">
    <reaction evidence="1">
        <text>(6R)-10-formyltetrahydrofolate + 5-amino-1-(5-phospho-beta-D-ribosyl)imidazole-4-carboxamide = 5-formamido-1-(5-phospho-D-ribosyl)imidazole-4-carboxamide + (6S)-5,6,7,8-tetrahydrofolate</text>
        <dbReference type="Rhea" id="RHEA:22192"/>
        <dbReference type="ChEBI" id="CHEBI:57453"/>
        <dbReference type="ChEBI" id="CHEBI:58467"/>
        <dbReference type="ChEBI" id="CHEBI:58475"/>
        <dbReference type="ChEBI" id="CHEBI:195366"/>
        <dbReference type="EC" id="2.1.2.3"/>
    </reaction>
</comment>
<comment type="catalytic activity">
    <reaction evidence="1">
        <text>IMP + H2O = 5-formamido-1-(5-phospho-D-ribosyl)imidazole-4-carboxamide</text>
        <dbReference type="Rhea" id="RHEA:18445"/>
        <dbReference type="ChEBI" id="CHEBI:15377"/>
        <dbReference type="ChEBI" id="CHEBI:58053"/>
        <dbReference type="ChEBI" id="CHEBI:58467"/>
        <dbReference type="EC" id="3.5.4.10"/>
    </reaction>
</comment>
<comment type="pathway">
    <text evidence="1">Purine metabolism; IMP biosynthesis via de novo pathway; 5-formamido-1-(5-phospho-D-ribosyl)imidazole-4-carboxamide from 5-amino-1-(5-phospho-D-ribosyl)imidazole-4-carboxamide (10-formyl THF route): step 1/1.</text>
</comment>
<comment type="pathway">
    <text evidence="1">Purine metabolism; IMP biosynthesis via de novo pathway; IMP from 5-formamido-1-(5-phospho-D-ribosyl)imidazole-4-carboxamide: step 1/1.</text>
</comment>
<comment type="domain">
    <text evidence="1">The IMP cyclohydrolase activity resides in the N-terminal region.</text>
</comment>
<comment type="similarity">
    <text evidence="1">Belongs to the PurH family.</text>
</comment>
<sequence length="529" mass="57355">MQQRRPVRRALLSVSDKAGIIEFAQALSARGVELLSTGGTARLLAEKGLAVTEVSDYTGFPEMMDGRVKTLHPKVHGGILGRRGQDDAIMEQHHIAPIDMVVVNLYPFAETVARVGCSLEDAVENIDIGGPTMVRSAAKNHKDVAIVVKSSDYDAIIKEMDANEGSLTLDTRFDLSIKAFEHTAAYDSMIANYFGSMVPAYHGESKEAAGRFPRTLNLNFIKKQDMRYGENSHQQAAFYIEENVKEASVATAQQVQGKALSYNNIADTDAALECVKAFNEPACVIVKHANPCGVAVSTSILDAYDRAYKTDPTSAFGGIIAFNRELDAETAQAIISRQFVEVIIAPSATEEALKITAAKQNVRVLTCGQWAQRVPGLDFKRVNGGLLVQDRDLGMVSEAELRVVSKRQPTEQELRDALFCWKVAKFVKSNAIVYAKENMTIGIGAGQMSRVYSAKIAGIKAADEGLEVKGSAMASDAFFPFRDGIDAAAAVGVSCVIQPGGSIRDDEVIAAADEHGIAMIFTDMRHFRH</sequence>
<keyword id="KW-0378">Hydrolase</keyword>
<keyword id="KW-0511">Multifunctional enzyme</keyword>
<keyword id="KW-0658">Purine biosynthesis</keyword>
<keyword id="KW-0808">Transferase</keyword>
<protein>
    <recommendedName>
        <fullName evidence="1">Bifunctional purine biosynthesis protein PurH</fullName>
    </recommendedName>
    <domain>
        <recommendedName>
            <fullName evidence="1">Phosphoribosylaminoimidazolecarboxamide formyltransferase</fullName>
            <ecNumber evidence="1">2.1.2.3</ecNumber>
        </recommendedName>
        <alternativeName>
            <fullName evidence="1">AICAR transformylase</fullName>
        </alternativeName>
    </domain>
    <domain>
        <recommendedName>
            <fullName evidence="1">IMP cyclohydrolase</fullName>
            <ecNumber evidence="1">3.5.4.10</ecNumber>
        </recommendedName>
        <alternativeName>
            <fullName evidence="1">ATIC</fullName>
        </alternativeName>
        <alternativeName>
            <fullName evidence="1">IMP synthase</fullName>
        </alternativeName>
        <alternativeName>
            <fullName evidence="1">Inosinicase</fullName>
        </alternativeName>
    </domain>
</protein>
<evidence type="ECO:0000255" key="1">
    <source>
        <dbReference type="HAMAP-Rule" id="MF_00139"/>
    </source>
</evidence>
<evidence type="ECO:0000255" key="2">
    <source>
        <dbReference type="PROSITE-ProRule" id="PRU01202"/>
    </source>
</evidence>
<proteinExistence type="inferred from homology"/>
<organism>
    <name type="scientific">Salmonella enteritidis PT4 (strain P125109)</name>
    <dbReference type="NCBI Taxonomy" id="550537"/>
    <lineage>
        <taxon>Bacteria</taxon>
        <taxon>Pseudomonadati</taxon>
        <taxon>Pseudomonadota</taxon>
        <taxon>Gammaproteobacteria</taxon>
        <taxon>Enterobacterales</taxon>
        <taxon>Enterobacteriaceae</taxon>
        <taxon>Salmonella</taxon>
    </lineage>
</organism>
<reference key="1">
    <citation type="journal article" date="2008" name="Genome Res.">
        <title>Comparative genome analysis of Salmonella enteritidis PT4 and Salmonella gallinarum 287/91 provides insights into evolutionary and host adaptation pathways.</title>
        <authorList>
            <person name="Thomson N.R."/>
            <person name="Clayton D.J."/>
            <person name="Windhorst D."/>
            <person name="Vernikos G."/>
            <person name="Davidson S."/>
            <person name="Churcher C."/>
            <person name="Quail M.A."/>
            <person name="Stevens M."/>
            <person name="Jones M.A."/>
            <person name="Watson M."/>
            <person name="Barron A."/>
            <person name="Layton A."/>
            <person name="Pickard D."/>
            <person name="Kingsley R.A."/>
            <person name="Bignell A."/>
            <person name="Clark L."/>
            <person name="Harris B."/>
            <person name="Ormond D."/>
            <person name="Abdellah Z."/>
            <person name="Brooks K."/>
            <person name="Cherevach I."/>
            <person name="Chillingworth T."/>
            <person name="Woodward J."/>
            <person name="Norberczak H."/>
            <person name="Lord A."/>
            <person name="Arrowsmith C."/>
            <person name="Jagels K."/>
            <person name="Moule S."/>
            <person name="Mungall K."/>
            <person name="Saunders M."/>
            <person name="Whitehead S."/>
            <person name="Chabalgoity J.A."/>
            <person name="Maskell D."/>
            <person name="Humphreys T."/>
            <person name="Roberts M."/>
            <person name="Barrow P.A."/>
            <person name="Dougan G."/>
            <person name="Parkhill J."/>
        </authorList>
    </citation>
    <scope>NUCLEOTIDE SEQUENCE [LARGE SCALE GENOMIC DNA]</scope>
    <source>
        <strain>P125109</strain>
    </source>
</reference>
<name>PUR9_SALEP</name>